<sequence>MALERLFRRKRPSGGNRDVPELWTKCEACGAQIYKKEFQENLHVCPKCGHHHRLPARERVAMLADPGTFQEITRLRPLDPLGFVDTKPYVERLKAYQAETGRPDAILGGTCQIGGVPAVLLVMDYAFAGGSMGSVVGEEIARGAERAAEEGRALVIVAASGGARMQEAALSLMQMAKTVMSLDRVWARRLPYVSVLTDPTTGGVTASFAALADVIFAEPGALIGFAGPRVIRQTIRQELPEGFQRSEFLLKHGMVDRVTDRRRLKEELVRVLRHLHPGVAYAPGV</sequence>
<accession>Q5SHG2</accession>
<protein>
    <recommendedName>
        <fullName evidence="1">Acetyl-coenzyme A carboxylase carboxyl transferase subunit beta</fullName>
        <shortName evidence="1">ACCase subunit beta</shortName>
        <shortName evidence="1">Acetyl-CoA carboxylase carboxyltransferase subunit beta</shortName>
        <ecNumber evidence="1">2.1.3.15</ecNumber>
    </recommendedName>
</protein>
<name>ACCD_THET8</name>
<reference key="1">
    <citation type="submission" date="2004-11" db="EMBL/GenBank/DDBJ databases">
        <title>Complete genome sequence of Thermus thermophilus HB8.</title>
        <authorList>
            <person name="Masui R."/>
            <person name="Kurokawa K."/>
            <person name="Nakagawa N."/>
            <person name="Tokunaga F."/>
            <person name="Koyama Y."/>
            <person name="Shibata T."/>
            <person name="Oshima T."/>
            <person name="Yokoyama S."/>
            <person name="Yasunaga T."/>
            <person name="Kuramitsu S."/>
        </authorList>
    </citation>
    <scope>NUCLEOTIDE SEQUENCE [LARGE SCALE GENOMIC DNA]</scope>
    <source>
        <strain>ATCC 27634 / DSM 579 / HB8</strain>
    </source>
</reference>
<comment type="function">
    <text evidence="1">Component of the acetyl coenzyme A carboxylase (ACC) complex. Biotin carboxylase (BC) catalyzes the carboxylation of biotin on its carrier protein (BCCP) and then the CO(2) group is transferred by the transcarboxylase to acetyl-CoA to form malonyl-CoA.</text>
</comment>
<comment type="catalytic activity">
    <reaction evidence="1">
        <text>N(6)-carboxybiotinyl-L-lysyl-[protein] + acetyl-CoA = N(6)-biotinyl-L-lysyl-[protein] + malonyl-CoA</text>
        <dbReference type="Rhea" id="RHEA:54728"/>
        <dbReference type="Rhea" id="RHEA-COMP:10505"/>
        <dbReference type="Rhea" id="RHEA-COMP:10506"/>
        <dbReference type="ChEBI" id="CHEBI:57288"/>
        <dbReference type="ChEBI" id="CHEBI:57384"/>
        <dbReference type="ChEBI" id="CHEBI:83144"/>
        <dbReference type="ChEBI" id="CHEBI:83145"/>
        <dbReference type="EC" id="2.1.3.15"/>
    </reaction>
</comment>
<comment type="cofactor">
    <cofactor evidence="1">
        <name>Zn(2+)</name>
        <dbReference type="ChEBI" id="CHEBI:29105"/>
    </cofactor>
    <text evidence="1">Binds 1 zinc ion per subunit.</text>
</comment>
<comment type="pathway">
    <text evidence="1">Lipid metabolism; malonyl-CoA biosynthesis; malonyl-CoA from acetyl-CoA: step 1/1.</text>
</comment>
<comment type="subunit">
    <text evidence="1">Acetyl-CoA carboxylase is a heterohexamer composed of biotin carboxyl carrier protein (AccB), biotin carboxylase (AccC) and two subunits each of ACCase subunit alpha (AccA) and ACCase subunit beta (AccD).</text>
</comment>
<comment type="subcellular location">
    <subcellularLocation>
        <location evidence="1">Cytoplasm</location>
    </subcellularLocation>
</comment>
<comment type="similarity">
    <text evidence="1">Belongs to the AccD/PCCB family.</text>
</comment>
<organism>
    <name type="scientific">Thermus thermophilus (strain ATCC 27634 / DSM 579 / HB8)</name>
    <dbReference type="NCBI Taxonomy" id="300852"/>
    <lineage>
        <taxon>Bacteria</taxon>
        <taxon>Thermotogati</taxon>
        <taxon>Deinococcota</taxon>
        <taxon>Deinococci</taxon>
        <taxon>Thermales</taxon>
        <taxon>Thermaceae</taxon>
        <taxon>Thermus</taxon>
    </lineage>
</organism>
<dbReference type="EC" id="2.1.3.15" evidence="1"/>
<dbReference type="EMBL" id="AP008226">
    <property type="protein sequence ID" value="BAD71591.1"/>
    <property type="molecule type" value="Genomic_DNA"/>
</dbReference>
<dbReference type="RefSeq" id="WP_011228904.1">
    <property type="nucleotide sequence ID" value="NC_006461.1"/>
</dbReference>
<dbReference type="RefSeq" id="YP_145034.1">
    <property type="nucleotide sequence ID" value="NC_006461.1"/>
</dbReference>
<dbReference type="SMR" id="Q5SHG2"/>
<dbReference type="EnsemblBacteria" id="BAD71591">
    <property type="protein sequence ID" value="BAD71591"/>
    <property type="gene ID" value="BAD71591"/>
</dbReference>
<dbReference type="GeneID" id="3169430"/>
<dbReference type="KEGG" id="ttj:TTHA1768"/>
<dbReference type="PATRIC" id="fig|300852.9.peg.1738"/>
<dbReference type="eggNOG" id="COG0777">
    <property type="taxonomic scope" value="Bacteria"/>
</dbReference>
<dbReference type="HOGENOM" id="CLU_015486_1_1_0"/>
<dbReference type="PhylomeDB" id="Q5SHG2"/>
<dbReference type="UniPathway" id="UPA00655">
    <property type="reaction ID" value="UER00711"/>
</dbReference>
<dbReference type="Proteomes" id="UP000000532">
    <property type="component" value="Chromosome"/>
</dbReference>
<dbReference type="GO" id="GO:0009317">
    <property type="term" value="C:acetyl-CoA carboxylase complex"/>
    <property type="evidence" value="ECO:0007669"/>
    <property type="project" value="InterPro"/>
</dbReference>
<dbReference type="GO" id="GO:0003989">
    <property type="term" value="F:acetyl-CoA carboxylase activity"/>
    <property type="evidence" value="ECO:0007669"/>
    <property type="project" value="InterPro"/>
</dbReference>
<dbReference type="GO" id="GO:0005524">
    <property type="term" value="F:ATP binding"/>
    <property type="evidence" value="ECO:0007669"/>
    <property type="project" value="UniProtKB-KW"/>
</dbReference>
<dbReference type="GO" id="GO:0016743">
    <property type="term" value="F:carboxyl- or carbamoyltransferase activity"/>
    <property type="evidence" value="ECO:0007669"/>
    <property type="project" value="UniProtKB-UniRule"/>
</dbReference>
<dbReference type="GO" id="GO:0008270">
    <property type="term" value="F:zinc ion binding"/>
    <property type="evidence" value="ECO:0007669"/>
    <property type="project" value="UniProtKB-UniRule"/>
</dbReference>
<dbReference type="GO" id="GO:0006633">
    <property type="term" value="P:fatty acid biosynthetic process"/>
    <property type="evidence" value="ECO:0007669"/>
    <property type="project" value="UniProtKB-KW"/>
</dbReference>
<dbReference type="GO" id="GO:2001295">
    <property type="term" value="P:malonyl-CoA biosynthetic process"/>
    <property type="evidence" value="ECO:0007669"/>
    <property type="project" value="UniProtKB-UniRule"/>
</dbReference>
<dbReference type="Gene3D" id="3.90.226.10">
    <property type="entry name" value="2-enoyl-CoA Hydratase, Chain A, domain 1"/>
    <property type="match status" value="1"/>
</dbReference>
<dbReference type="HAMAP" id="MF_01395">
    <property type="entry name" value="AcetylCoA_CT_beta"/>
    <property type="match status" value="1"/>
</dbReference>
<dbReference type="InterPro" id="IPR034733">
    <property type="entry name" value="AcCoA_carboxyl_beta"/>
</dbReference>
<dbReference type="InterPro" id="IPR000438">
    <property type="entry name" value="Acetyl_CoA_COase_Trfase_b_su"/>
</dbReference>
<dbReference type="InterPro" id="IPR029045">
    <property type="entry name" value="ClpP/crotonase-like_dom_sf"/>
</dbReference>
<dbReference type="InterPro" id="IPR011762">
    <property type="entry name" value="COA_CT_N"/>
</dbReference>
<dbReference type="InterPro" id="IPR041010">
    <property type="entry name" value="Znf-ACC"/>
</dbReference>
<dbReference type="NCBIfam" id="TIGR00515">
    <property type="entry name" value="accD"/>
    <property type="match status" value="1"/>
</dbReference>
<dbReference type="PANTHER" id="PTHR42995">
    <property type="entry name" value="ACETYL-COENZYME A CARBOXYLASE CARBOXYL TRANSFERASE SUBUNIT BETA, CHLOROPLASTIC"/>
    <property type="match status" value="1"/>
</dbReference>
<dbReference type="PANTHER" id="PTHR42995:SF5">
    <property type="entry name" value="ACETYL-COENZYME A CARBOXYLASE CARBOXYL TRANSFERASE SUBUNIT BETA, CHLOROPLASTIC"/>
    <property type="match status" value="1"/>
</dbReference>
<dbReference type="Pfam" id="PF01039">
    <property type="entry name" value="Carboxyl_trans"/>
    <property type="match status" value="1"/>
</dbReference>
<dbReference type="Pfam" id="PF17848">
    <property type="entry name" value="Zn_ribbon_ACC"/>
    <property type="match status" value="1"/>
</dbReference>
<dbReference type="PRINTS" id="PR01070">
    <property type="entry name" value="ACCCTRFRASEB"/>
</dbReference>
<dbReference type="SUPFAM" id="SSF52096">
    <property type="entry name" value="ClpP/crotonase"/>
    <property type="match status" value="1"/>
</dbReference>
<dbReference type="PROSITE" id="PS50980">
    <property type="entry name" value="COA_CT_NTER"/>
    <property type="match status" value="1"/>
</dbReference>
<proteinExistence type="inferred from homology"/>
<evidence type="ECO:0000255" key="1">
    <source>
        <dbReference type="HAMAP-Rule" id="MF_01395"/>
    </source>
</evidence>
<evidence type="ECO:0000255" key="2">
    <source>
        <dbReference type="PROSITE-ProRule" id="PRU01136"/>
    </source>
</evidence>
<feature type="chain" id="PRO_0000389895" description="Acetyl-coenzyme A carboxylase carboxyl transferase subunit beta">
    <location>
        <begin position="1"/>
        <end position="285"/>
    </location>
</feature>
<feature type="domain" description="CoA carboxyltransferase N-terminal" evidence="2">
    <location>
        <begin position="22"/>
        <end position="285"/>
    </location>
</feature>
<feature type="zinc finger region" description="C4-type" evidence="1">
    <location>
        <begin position="26"/>
        <end position="48"/>
    </location>
</feature>
<feature type="binding site" evidence="1">
    <location>
        <position position="26"/>
    </location>
    <ligand>
        <name>Zn(2+)</name>
        <dbReference type="ChEBI" id="CHEBI:29105"/>
    </ligand>
</feature>
<feature type="binding site" evidence="1">
    <location>
        <position position="29"/>
    </location>
    <ligand>
        <name>Zn(2+)</name>
        <dbReference type="ChEBI" id="CHEBI:29105"/>
    </ligand>
</feature>
<feature type="binding site" evidence="1">
    <location>
        <position position="45"/>
    </location>
    <ligand>
        <name>Zn(2+)</name>
        <dbReference type="ChEBI" id="CHEBI:29105"/>
    </ligand>
</feature>
<feature type="binding site" evidence="1">
    <location>
        <position position="48"/>
    </location>
    <ligand>
        <name>Zn(2+)</name>
        <dbReference type="ChEBI" id="CHEBI:29105"/>
    </ligand>
</feature>
<gene>
    <name evidence="1" type="primary">accD</name>
    <name type="ordered locus">TTHA1768</name>
</gene>
<keyword id="KW-0067">ATP-binding</keyword>
<keyword id="KW-0963">Cytoplasm</keyword>
<keyword id="KW-0275">Fatty acid biosynthesis</keyword>
<keyword id="KW-0276">Fatty acid metabolism</keyword>
<keyword id="KW-0444">Lipid biosynthesis</keyword>
<keyword id="KW-0443">Lipid metabolism</keyword>
<keyword id="KW-0479">Metal-binding</keyword>
<keyword id="KW-0547">Nucleotide-binding</keyword>
<keyword id="KW-1185">Reference proteome</keyword>
<keyword id="KW-0808">Transferase</keyword>
<keyword id="KW-0862">Zinc</keyword>
<keyword id="KW-0863">Zinc-finger</keyword>